<reference key="1">
    <citation type="journal article" date="2006" name="Genetics">
        <title>Structural diversity and differential transcription of the patatin multicopy gene family during potato tuber development.</title>
        <authorList>
            <person name="Stupar R.M."/>
            <person name="Beaubien K.A."/>
            <person name="Jin W."/>
            <person name="Song J."/>
            <person name="Lee M.-K."/>
            <person name="Wu C."/>
            <person name="Zhang H.-B."/>
            <person name="Han B."/>
            <person name="Jiang J."/>
        </authorList>
    </citation>
    <scope>NUCLEOTIDE SEQUENCE [MRNA]</scope>
    <scope>DEVELOPMENTAL STAGE</scope>
    <scope>TISSUE SPECIFICITY</scope>
    <source>
        <strain>cv. Kennebec</strain>
    </source>
</reference>
<accession>Q2MY56</accession>
<organism>
    <name type="scientific">Solanum tuberosum</name>
    <name type="common">Potato</name>
    <dbReference type="NCBI Taxonomy" id="4113"/>
    <lineage>
        <taxon>Eukaryota</taxon>
        <taxon>Viridiplantae</taxon>
        <taxon>Streptophyta</taxon>
        <taxon>Embryophyta</taxon>
        <taxon>Tracheophyta</taxon>
        <taxon>Spermatophyta</taxon>
        <taxon>Magnoliopsida</taxon>
        <taxon>eudicotyledons</taxon>
        <taxon>Gunneridae</taxon>
        <taxon>Pentapetalae</taxon>
        <taxon>asterids</taxon>
        <taxon>lamiids</taxon>
        <taxon>Solanales</taxon>
        <taxon>Solanaceae</taxon>
        <taxon>Solanoideae</taxon>
        <taxon>Solaneae</taxon>
        <taxon>Solanum</taxon>
    </lineage>
</organism>
<dbReference type="EC" id="3.1.1.-"/>
<dbReference type="EMBL" id="DQ274482">
    <property type="protein sequence ID" value="ABC55682.1"/>
    <property type="molecule type" value="mRNA"/>
</dbReference>
<dbReference type="SMR" id="Q2MY56"/>
<dbReference type="InParanoid" id="Q2MY56"/>
<dbReference type="Proteomes" id="UP000011115">
    <property type="component" value="Unassembled WGS sequence"/>
</dbReference>
<dbReference type="ExpressionAtlas" id="Q2MY56">
    <property type="expression patterns" value="baseline"/>
</dbReference>
<dbReference type="GO" id="GO:0005773">
    <property type="term" value="C:vacuole"/>
    <property type="evidence" value="ECO:0007669"/>
    <property type="project" value="UniProtKB-SubCell"/>
</dbReference>
<dbReference type="GO" id="GO:0047372">
    <property type="term" value="F:monoacylglycerol lipase activity"/>
    <property type="evidence" value="ECO:0000318"/>
    <property type="project" value="GO_Central"/>
</dbReference>
<dbReference type="GO" id="GO:0045735">
    <property type="term" value="F:nutrient reservoir activity"/>
    <property type="evidence" value="ECO:0007669"/>
    <property type="project" value="UniProtKB-KW"/>
</dbReference>
<dbReference type="GO" id="GO:0004620">
    <property type="term" value="F:phospholipase activity"/>
    <property type="evidence" value="ECO:0000318"/>
    <property type="project" value="GO_Central"/>
</dbReference>
<dbReference type="GO" id="GO:0006952">
    <property type="term" value="P:defense response"/>
    <property type="evidence" value="ECO:0007669"/>
    <property type="project" value="UniProtKB-KW"/>
</dbReference>
<dbReference type="GO" id="GO:0016042">
    <property type="term" value="P:lipid catabolic process"/>
    <property type="evidence" value="ECO:0007669"/>
    <property type="project" value="UniProtKB-KW"/>
</dbReference>
<dbReference type="Gene3D" id="3.40.1090.10">
    <property type="entry name" value="Cytosolic phospholipase A2 catalytic domain"/>
    <property type="match status" value="1"/>
</dbReference>
<dbReference type="InterPro" id="IPR016035">
    <property type="entry name" value="Acyl_Trfase/lysoPLipase"/>
</dbReference>
<dbReference type="InterPro" id="IPR002641">
    <property type="entry name" value="PNPLA_dom"/>
</dbReference>
<dbReference type="PANTHER" id="PTHR32176:SF85">
    <property type="entry name" value="PATATIN GROUP D-2"/>
    <property type="match status" value="1"/>
</dbReference>
<dbReference type="PANTHER" id="PTHR32176">
    <property type="entry name" value="XYLOSE ISOMERASE"/>
    <property type="match status" value="1"/>
</dbReference>
<dbReference type="Pfam" id="PF01734">
    <property type="entry name" value="Patatin"/>
    <property type="match status" value="1"/>
</dbReference>
<dbReference type="SUPFAM" id="SSF52151">
    <property type="entry name" value="FabD/lysophospholipase-like"/>
    <property type="match status" value="1"/>
</dbReference>
<dbReference type="PROSITE" id="PS51635">
    <property type="entry name" value="PNPLA"/>
    <property type="match status" value="1"/>
</dbReference>
<comment type="function">
    <text evidence="1">Probable lipolytic acyl hydrolase (LAH), an activity which is thought to be involved in the response of tubers to pathogens.</text>
</comment>
<comment type="subcellular location">
    <subcellularLocation>
        <location evidence="1">Vacuole</location>
    </subcellularLocation>
</comment>
<comment type="tissue specificity">
    <text evidence="4">Tuber.</text>
</comment>
<comment type="developmental stage">
    <text evidence="4">Accumulates progressively during tuber formation from stolon.</text>
</comment>
<comment type="domain">
    <text>The nitrogen atoms of the two glycine residues in the GGXR motif define the oxyanion hole, and stabilize the oxyanion that forms during the nucleophilic attack by the catalytic serine during substrate cleavage.</text>
</comment>
<comment type="miscellaneous">
    <text>Patatin have a dual role as a somatic storage protein and as an enzyme involved in host resistance.</text>
</comment>
<comment type="similarity">
    <text evidence="5">Belongs to the patatin family.</text>
</comment>
<protein>
    <recommendedName>
        <fullName>Patatin group D-2</fullName>
        <ecNumber>3.1.1.-</ecNumber>
    </recommendedName>
</protein>
<sequence>MATTKSFLILIVMILATTSSTFASLEEMVTVLSIDGGGIKGIIPGTILEFLEGQLQKMDNNADARLADYFDVIGGTSTGGLLTSMITTPNENNRPFAAANEIVPFFFEHGPHIFNSSTGQFFGPKYDGKYLMQVLQENLGETRVHQALTEVAISSFDIKTNKPVIFTKSDLAKSPELDAKMYDICYSTAAAPTYFPPHYFTTNTINGDKYEFNLVDGAVATVADPALLSISVATRLAEKDPAFASIRSLNYKKMLLLSLGTGTTSEFDKTYTAEETAKWGAIQWMLVIQRMTDAASSYMTDYYLSTVFQAQNSQKNYLRVQENALTGTTTEMDDASEANMESLVQVGENLLKKPVSKDNPETYEEALKRFAKLLSDRKKLRANKASY</sequence>
<keyword id="KW-0175">Coiled coil</keyword>
<keyword id="KW-0325">Glycoprotein</keyword>
<keyword id="KW-0378">Hydrolase</keyword>
<keyword id="KW-0442">Lipid degradation</keyword>
<keyword id="KW-0443">Lipid metabolism</keyword>
<keyword id="KW-0611">Plant defense</keyword>
<keyword id="KW-1185">Reference proteome</keyword>
<keyword id="KW-0732">Signal</keyword>
<keyword id="KW-0758">Storage protein</keyword>
<keyword id="KW-0926">Vacuole</keyword>
<feature type="signal peptide" evidence="2">
    <location>
        <begin position="1"/>
        <end position="23"/>
    </location>
</feature>
<feature type="chain" id="PRO_0000296704" description="Patatin group D-2">
    <location>
        <begin position="24"/>
        <end position="387"/>
    </location>
</feature>
<feature type="domain" description="PNPLA" evidence="3">
    <location>
        <begin position="32"/>
        <end position="230"/>
    </location>
</feature>
<feature type="coiled-coil region" evidence="2">
    <location>
        <begin position="361"/>
        <end position="385"/>
    </location>
</feature>
<feature type="short sequence motif" description="GXGXXG" evidence="3">
    <location>
        <begin position="36"/>
        <end position="41"/>
    </location>
</feature>
<feature type="short sequence motif" description="GXSXG" evidence="3">
    <location>
        <begin position="75"/>
        <end position="79"/>
    </location>
</feature>
<feature type="short sequence motif" description="DGA/G" evidence="3">
    <location>
        <begin position="216"/>
        <end position="218"/>
    </location>
</feature>
<feature type="active site" description="Nucleophile" evidence="3">
    <location>
        <position position="77"/>
    </location>
</feature>
<feature type="active site" description="Proton acceptor" evidence="3">
    <location>
        <position position="216"/>
    </location>
</feature>
<feature type="glycosylation site" description="N-linked (GlcNAc...) asparagine" evidence="2">
    <location>
        <position position="115"/>
    </location>
</feature>
<proteinExistence type="evidence at transcript level"/>
<name>PATD2_SOLTU</name>
<evidence type="ECO:0000250" key="1"/>
<evidence type="ECO:0000255" key="2"/>
<evidence type="ECO:0000255" key="3">
    <source>
        <dbReference type="PROSITE-ProRule" id="PRU01161"/>
    </source>
</evidence>
<evidence type="ECO:0000269" key="4">
    <source>
    </source>
</evidence>
<evidence type="ECO:0000305" key="5"/>